<dbReference type="EMBL" id="M96377">
    <property type="protein sequence ID" value="AAA41708.1"/>
    <property type="molecule type" value="mRNA"/>
</dbReference>
<dbReference type="PIR" id="D40228">
    <property type="entry name" value="D40228"/>
</dbReference>
<dbReference type="RefSeq" id="XP_008758286.1">
    <property type="nucleotide sequence ID" value="XM_008760064.2"/>
</dbReference>
<dbReference type="RefSeq" id="XP_063120696.1">
    <molecule id="Q63376-1"/>
    <property type="nucleotide sequence ID" value="XM_063264626.1"/>
</dbReference>
<dbReference type="RefSeq" id="XP_063120723.1">
    <molecule id="Q63376-3"/>
    <property type="nucleotide sequence ID" value="XM_063264653.1"/>
</dbReference>
<dbReference type="PDB" id="3MW3">
    <property type="method" value="X-ray"/>
    <property type="resolution" value="2.33 A"/>
    <property type="chains" value="A=87-290"/>
</dbReference>
<dbReference type="PDBsum" id="3MW3"/>
<dbReference type="SMR" id="Q63376"/>
<dbReference type="BioGRID" id="250509">
    <property type="interactions" value="4"/>
</dbReference>
<dbReference type="IntAct" id="Q63376">
    <property type="interactions" value="1"/>
</dbReference>
<dbReference type="MINT" id="Q63376"/>
<dbReference type="GlyCosmos" id="Q63376">
    <property type="glycosylation" value="1 site, No reported glycans"/>
</dbReference>
<dbReference type="Ensembl" id="ENSRNOT00000028651.9">
    <molecule id="Q63376-1"/>
    <property type="protein sequence ID" value="ENSRNOP00000028651.5"/>
    <property type="gene ID" value="ENSRNOG00000021103.10"/>
</dbReference>
<dbReference type="GeneID" id="116595"/>
<dbReference type="UCSC" id="RGD:620211">
    <molecule id="Q63376-1"/>
    <property type="organism name" value="rat"/>
</dbReference>
<dbReference type="AGR" id="RGD:620211"/>
<dbReference type="RGD" id="620211">
    <property type="gene designation" value="Nrxn2"/>
</dbReference>
<dbReference type="GeneTree" id="ENSGT00940000155978"/>
<dbReference type="HOGENOM" id="CLU_025785_2_0_1"/>
<dbReference type="EvolutionaryTrace" id="Q63376"/>
<dbReference type="Proteomes" id="UP000002494">
    <property type="component" value="Chromosome 1"/>
</dbReference>
<dbReference type="Bgee" id="ENSRNOG00000021103">
    <property type="expression patterns" value="Expressed in frontal cortex and 20 other cell types or tissues"/>
</dbReference>
<dbReference type="ExpressionAtlas" id="Q63376">
    <property type="expression patterns" value="baseline and differential"/>
</dbReference>
<dbReference type="GO" id="GO:0042995">
    <property type="term" value="C:cell projection"/>
    <property type="evidence" value="ECO:0007669"/>
    <property type="project" value="UniProtKB-KW"/>
</dbReference>
<dbReference type="GO" id="GO:0098978">
    <property type="term" value="C:glutamatergic synapse"/>
    <property type="evidence" value="ECO:0000266"/>
    <property type="project" value="RGD"/>
</dbReference>
<dbReference type="GO" id="GO:0042734">
    <property type="term" value="C:presynaptic membrane"/>
    <property type="evidence" value="ECO:0007669"/>
    <property type="project" value="UniProtKB-SubCell"/>
</dbReference>
<dbReference type="GO" id="GO:0032991">
    <property type="term" value="C:protein-containing complex"/>
    <property type="evidence" value="ECO:0000266"/>
    <property type="project" value="RGD"/>
</dbReference>
<dbReference type="GO" id="GO:0005246">
    <property type="term" value="F:calcium channel regulator activity"/>
    <property type="evidence" value="ECO:0000266"/>
    <property type="project" value="RGD"/>
</dbReference>
<dbReference type="GO" id="GO:0050839">
    <property type="term" value="F:cell adhesion molecule binding"/>
    <property type="evidence" value="ECO:0000266"/>
    <property type="project" value="RGD"/>
</dbReference>
<dbReference type="GO" id="GO:0046872">
    <property type="term" value="F:metal ion binding"/>
    <property type="evidence" value="ECO:0007669"/>
    <property type="project" value="UniProtKB-KW"/>
</dbReference>
<dbReference type="GO" id="GO:0097109">
    <property type="term" value="F:neuroligin family protein binding"/>
    <property type="evidence" value="ECO:0000266"/>
    <property type="project" value="RGD"/>
</dbReference>
<dbReference type="GO" id="GO:0004888">
    <property type="term" value="F:transmembrane signaling receptor activity"/>
    <property type="evidence" value="ECO:0000266"/>
    <property type="project" value="RGD"/>
</dbReference>
<dbReference type="GO" id="GO:0030534">
    <property type="term" value="P:adult behavior"/>
    <property type="evidence" value="ECO:0000266"/>
    <property type="project" value="RGD"/>
</dbReference>
<dbReference type="GO" id="GO:0007155">
    <property type="term" value="P:cell adhesion"/>
    <property type="evidence" value="ECO:0007669"/>
    <property type="project" value="UniProtKB-KW"/>
</dbReference>
<dbReference type="GO" id="GO:0007268">
    <property type="term" value="P:chemical synaptic transmission"/>
    <property type="evidence" value="ECO:0000266"/>
    <property type="project" value="RGD"/>
</dbReference>
<dbReference type="GO" id="GO:0097116">
    <property type="term" value="P:gephyrin clustering involved in postsynaptic density assembly"/>
    <property type="evidence" value="ECO:0000266"/>
    <property type="project" value="RGD"/>
</dbReference>
<dbReference type="GO" id="GO:0097118">
    <property type="term" value="P:neuroligin clustering involved in postsynaptic membrane assembly"/>
    <property type="evidence" value="ECO:0000266"/>
    <property type="project" value="RGD"/>
</dbReference>
<dbReference type="GO" id="GO:0007269">
    <property type="term" value="P:neurotransmitter secretion"/>
    <property type="evidence" value="ECO:0000266"/>
    <property type="project" value="RGD"/>
</dbReference>
<dbReference type="GO" id="GO:0097119">
    <property type="term" value="P:postsynaptic density protein 95 clustering"/>
    <property type="evidence" value="ECO:0000266"/>
    <property type="project" value="RGD"/>
</dbReference>
<dbReference type="GO" id="GO:0097104">
    <property type="term" value="P:postsynaptic membrane assembly"/>
    <property type="evidence" value="ECO:0000266"/>
    <property type="project" value="RGD"/>
</dbReference>
<dbReference type="GO" id="GO:0099171">
    <property type="term" value="P:presynaptic modulation of chemical synaptic transmission"/>
    <property type="evidence" value="ECO:0000266"/>
    <property type="project" value="RGD"/>
</dbReference>
<dbReference type="GO" id="GO:0150052">
    <property type="term" value="P:regulation of postsynapse assembly"/>
    <property type="evidence" value="ECO:0000266"/>
    <property type="project" value="RGD"/>
</dbReference>
<dbReference type="GO" id="GO:0007165">
    <property type="term" value="P:signal transduction"/>
    <property type="evidence" value="ECO:0000266"/>
    <property type="project" value="RGD"/>
</dbReference>
<dbReference type="GO" id="GO:0035176">
    <property type="term" value="P:social behavior"/>
    <property type="evidence" value="ECO:0000266"/>
    <property type="project" value="RGD"/>
</dbReference>
<dbReference type="GO" id="GO:0007416">
    <property type="term" value="P:synapse assembly"/>
    <property type="evidence" value="ECO:0000266"/>
    <property type="project" value="RGD"/>
</dbReference>
<dbReference type="GO" id="GO:0042297">
    <property type="term" value="P:vocal learning"/>
    <property type="evidence" value="ECO:0000266"/>
    <property type="project" value="RGD"/>
</dbReference>
<dbReference type="GO" id="GO:0071625">
    <property type="term" value="P:vocalization behavior"/>
    <property type="evidence" value="ECO:0000266"/>
    <property type="project" value="RGD"/>
</dbReference>
<dbReference type="CDD" id="cd00110">
    <property type="entry name" value="LamG"/>
    <property type="match status" value="1"/>
</dbReference>
<dbReference type="FunFam" id="2.60.120.200:FF:000003">
    <property type="entry name" value="neurexin-1 isoform X1"/>
    <property type="match status" value="1"/>
</dbReference>
<dbReference type="Gene3D" id="2.60.120.200">
    <property type="match status" value="1"/>
</dbReference>
<dbReference type="InterPro" id="IPR013320">
    <property type="entry name" value="ConA-like_dom_sf"/>
</dbReference>
<dbReference type="InterPro" id="IPR001791">
    <property type="entry name" value="Laminin_G"/>
</dbReference>
<dbReference type="InterPro" id="IPR003585">
    <property type="entry name" value="Neurexin-like"/>
</dbReference>
<dbReference type="InterPro" id="IPR050372">
    <property type="entry name" value="Neurexin-related_CASP"/>
</dbReference>
<dbReference type="PANTHER" id="PTHR15036:SF52">
    <property type="entry name" value="NEUREXIN-2"/>
    <property type="match status" value="1"/>
</dbReference>
<dbReference type="PANTHER" id="PTHR15036">
    <property type="entry name" value="PIKACHURIN-LIKE PROTEIN"/>
    <property type="match status" value="1"/>
</dbReference>
<dbReference type="Pfam" id="PF02210">
    <property type="entry name" value="Laminin_G_2"/>
    <property type="match status" value="1"/>
</dbReference>
<dbReference type="SMART" id="SM00294">
    <property type="entry name" value="4.1m"/>
    <property type="match status" value="1"/>
</dbReference>
<dbReference type="SMART" id="SM00282">
    <property type="entry name" value="LamG"/>
    <property type="match status" value="1"/>
</dbReference>
<dbReference type="SUPFAM" id="SSF49899">
    <property type="entry name" value="Concanavalin A-like lectins/glucanases"/>
    <property type="match status" value="1"/>
</dbReference>
<dbReference type="PROSITE" id="PS50025">
    <property type="entry name" value="LAM_G_DOMAIN"/>
    <property type="match status" value="1"/>
</dbReference>
<proteinExistence type="evidence at protein level"/>
<comment type="function">
    <text>Neuronal cell surface protein that may be involved in cell recognition and cell adhesion.</text>
</comment>
<comment type="subunit">
    <text evidence="2 8 9">Interacts (via cytoplasmic C-terminal region) with CASK (PubMed:8786425). Isoform Beta 4b binds alpha-dystroglycan and neuroligins NLGN1, NLGN2 and NLGN3 (PubMed:8576240). Interacts with CBLN1, CBLN2 and, less avidly, with CBLN4 (By similarity). Interacts with CLSTN3 (By similarity).</text>
</comment>
<comment type="subcellular location">
    <subcellularLocation>
        <location evidence="10">Presynaptic cell membrane</location>
        <topology evidence="4">Single-pass type I membrane protein</topology>
    </subcellularLocation>
</comment>
<comment type="alternative products">
    <event type="alternative promoter"/>
    <event type="alternative splicing"/>
    <isoform>
        <id>Q63376-1</id>
        <name>1b</name>
        <name>Beta-4A5A</name>
        <sequence type="displayed"/>
    </isoform>
    <isoform>
        <id>Q63376-2</id>
        <name>2b</name>
        <name>Beta-4A5B</name>
        <sequence type="described" ref="VSP_003519"/>
    </isoform>
    <isoform>
        <id>Q63376-3</id>
        <name>3b</name>
        <name>Beta-4B5A</name>
        <sequence type="described" ref="VSP_003518"/>
    </isoform>
    <isoform>
        <id>Q63376-4</id>
        <name>4b</name>
        <name>Beta-4B5B</name>
        <sequence type="described" ref="VSP_003518 VSP_003519"/>
    </isoform>
    <isoform>
        <id>Q63376-5</id>
        <name>5b</name>
        <name>Beta-4A5A6</name>
        <sequence type="described" ref="VSP_003520"/>
    </isoform>
    <isoform>
        <id>Q63376-6</id>
        <name>6b</name>
        <name>Beta-4A5B6</name>
        <sequence type="described" ref="VSP_003519 VSP_003520"/>
    </isoform>
    <isoform>
        <id>Q63376-7</id>
        <name>7b</name>
        <name>Beta-4B5A6</name>
        <sequence type="described" ref="VSP_003518 VSP_003520"/>
    </isoform>
    <isoform>
        <id>Q63376-8</id>
        <name>8b</name>
        <name>Beta-4B5B6</name>
        <sequence type="described" ref="VSP_003518 VSP_003519 VSP_003520"/>
    </isoform>
    <isoform>
        <id>Q63374-1</id>
        <name>1a</name>
        <name>Alpha-1A2A3A4A5A</name>
        <sequence type="external"/>
    </isoform>
    <isoform>
        <id>Q63374-2</id>
        <name>2a</name>
        <name>Alpha-1B</name>
        <sequence type="external"/>
    </isoform>
    <isoform>
        <id>Q63374-3</id>
        <name>3a</name>
        <name>Alpha-1C</name>
        <sequence type="external"/>
    </isoform>
    <isoform>
        <id>Q63374-4</id>
        <name>4a</name>
        <name>Alpha-2B</name>
        <sequence type="external"/>
    </isoform>
    <isoform>
        <id>Q63374-5</id>
        <name>5a</name>
        <name>Alpha-2C</name>
        <sequence type="external"/>
    </isoform>
    <isoform>
        <id>Q63374-6</id>
        <name>6a</name>
        <name>Alpha-3B</name>
        <sequence type="external"/>
    </isoform>
    <isoform>
        <id>Q63374-7</id>
        <name>7a</name>
        <name>Alpha-3C</name>
        <sequence type="external"/>
    </isoform>
    <isoform>
        <id>Q63374-8</id>
        <name>8a</name>
        <name>Alpha-4B</name>
        <sequence type="external"/>
    </isoform>
    <isoform>
        <id>Q63374-9</id>
        <name>9a</name>
        <name>Alpha-5B</name>
        <sequence type="external"/>
    </isoform>
    <isoform>
        <id>Q63374-10</id>
        <name>10a</name>
        <name>Alpha-6</name>
        <sequence type="external"/>
    </isoform>
    <text>Two isoform types, alpha-type and beta-type are produced by alternative promoter usage. In addition there are at least five major alternatively spliced sites, each of which may be spliced in up to three different ways. Additional isoforms may derive from a minor cytoplasmic splice site 6. Combinatorial splicing at each of these six sites may lead to the generation of at least 216 isoforms but for simplicity only individual splice events are explicitly described below. Beta-type isoforms share the possibility of alternative splicing at sites 4, 5 and 6. Experimental confirmation may be lacking for some isoforms.</text>
</comment>
<comment type="tissue specificity">
    <text>Brain (neuronal synapse).</text>
</comment>
<comment type="PTM">
    <text evidence="1">O-glycosylated; contains heparan sulfate. Heparan sulfate attachment is required for synapse development by mediating interactions with neuroligins.</text>
</comment>
<comment type="similarity">
    <text evidence="10">Belongs to the neurexin family.</text>
</comment>
<feature type="signal peptide" evidence="7">
    <location>
        <begin position="1"/>
        <end position="46"/>
    </location>
</feature>
<feature type="chain" id="PRO_0000019498" description="Neurexin-2-beta">
    <location>
        <begin position="47"/>
        <end position="662"/>
    </location>
</feature>
<feature type="topological domain" description="Extracellular" evidence="4">
    <location>
        <begin position="47"/>
        <end position="586"/>
    </location>
</feature>
<feature type="transmembrane region" description="Helical" evidence="4">
    <location>
        <begin position="587"/>
        <end position="607"/>
    </location>
</feature>
<feature type="topological domain" description="Cytoplasmic" evidence="4">
    <location>
        <begin position="608"/>
        <end position="662"/>
    </location>
</feature>
<feature type="domain" description="Laminin G-like" evidence="5">
    <location>
        <begin position="87"/>
        <end position="295"/>
    </location>
</feature>
<feature type="region of interest" description="Disordered" evidence="6">
    <location>
        <begin position="1"/>
        <end position="27"/>
    </location>
</feature>
<feature type="region of interest" description="Disordered" evidence="6">
    <location>
        <begin position="408"/>
        <end position="458"/>
    </location>
</feature>
<feature type="region of interest" description="Disordered" evidence="6">
    <location>
        <begin position="476"/>
        <end position="496"/>
    </location>
</feature>
<feature type="region of interest" description="Disordered" evidence="6">
    <location>
        <begin position="530"/>
        <end position="557"/>
    </location>
</feature>
<feature type="region of interest" description="Disordered" evidence="6">
    <location>
        <begin position="629"/>
        <end position="662"/>
    </location>
</feature>
<feature type="compositionally biased region" description="Gly residues" evidence="6">
    <location>
        <begin position="1"/>
        <end position="10"/>
    </location>
</feature>
<feature type="binding site" evidence="3">
    <location>
        <position position="139"/>
    </location>
    <ligand>
        <name>Ca(2+)</name>
        <dbReference type="ChEBI" id="CHEBI:29108"/>
    </ligand>
</feature>
<feature type="binding site" evidence="3">
    <location>
        <position position="156"/>
    </location>
    <ligand>
        <name>Ca(2+)</name>
        <dbReference type="ChEBI" id="CHEBI:29108"/>
    </ligand>
</feature>
<feature type="binding site" evidence="3">
    <location>
        <position position="238"/>
    </location>
    <ligand>
        <name>Ca(2+)</name>
        <dbReference type="ChEBI" id="CHEBI:29108"/>
    </ligand>
</feature>
<feature type="binding site" evidence="3">
    <location>
        <position position="240"/>
    </location>
    <ligand>
        <name>Ca(2+)</name>
        <dbReference type="ChEBI" id="CHEBI:29108"/>
    </ligand>
</feature>
<feature type="glycosylation site" description="N-linked (GlcNAc...) asparagine" evidence="4">
    <location>
        <position position="186"/>
    </location>
</feature>
<feature type="glycosylation site" description="O-linked (Xyl...) (heparan sulfate) serine" evidence="1">
    <location>
        <position position="350"/>
    </location>
</feature>
<feature type="splice variant" id="VSP_003518" description="In isoform 3b, isoform 4b, isoform 7b and isoform 8b." evidence="10">
    <location>
        <begin position="203"/>
        <end position="232"/>
    </location>
</feature>
<feature type="splice variant" id="VSP_003519" description="In isoform 2b, isoform 4b, isoform 6b and isoform 8b." evidence="10">
    <location>
        <begin position="368"/>
        <end position="385"/>
    </location>
</feature>
<feature type="splice variant" id="VSP_003520" description="In isoform 5b, isoform 6b, isoform 7b and isoform 8b." evidence="10">
    <original>DEGSYQVDQSRNYISNSAQSNGAVVKEKAPAAPKTPSKAKKNKDKEYYV</original>
    <variation>CRKSPREEKLLPGSAQGLGLDLAKACCVCRCRATCIAGKPLEERGGGRGEGERQMQIYIKNK</variation>
    <location>
        <begin position="614"/>
        <end position="662"/>
    </location>
</feature>
<feature type="strand" evidence="11">
    <location>
        <begin position="88"/>
        <end position="101"/>
    </location>
</feature>
<feature type="strand" evidence="11">
    <location>
        <begin position="110"/>
        <end position="121"/>
    </location>
</feature>
<feature type="strand" evidence="11">
    <location>
        <begin position="124"/>
        <end position="133"/>
    </location>
</feature>
<feature type="strand" evidence="11">
    <location>
        <begin position="140"/>
        <end position="146"/>
    </location>
</feature>
<feature type="strand" evidence="11">
    <location>
        <begin position="149"/>
        <end position="164"/>
    </location>
</feature>
<feature type="strand" evidence="11">
    <location>
        <begin position="172"/>
        <end position="174"/>
    </location>
</feature>
<feature type="strand" evidence="11">
    <location>
        <begin position="176"/>
        <end position="183"/>
    </location>
</feature>
<feature type="strand" evidence="11">
    <location>
        <begin position="186"/>
        <end position="193"/>
    </location>
</feature>
<feature type="strand" evidence="11">
    <location>
        <begin position="221"/>
        <end position="227"/>
    </location>
</feature>
<feature type="strand" evidence="11">
    <location>
        <begin position="241"/>
        <end position="249"/>
    </location>
</feature>
<feature type="helix" evidence="11">
    <location>
        <begin position="250"/>
        <end position="252"/>
    </location>
</feature>
<feature type="strand" evidence="11">
    <location>
        <begin position="258"/>
        <end position="265"/>
    </location>
</feature>
<feature type="helix" evidence="11">
    <location>
        <begin position="270"/>
        <end position="275"/>
    </location>
</feature>
<feature type="strand" evidence="11">
    <location>
        <begin position="281"/>
        <end position="289"/>
    </location>
</feature>
<accession>Q63376</accession>
<gene>
    <name type="primary">Nrxn2</name>
</gene>
<keyword id="KW-0002">3D-structure</keyword>
<keyword id="KW-0877">Alternative promoter usage</keyword>
<keyword id="KW-0025">Alternative splicing</keyword>
<keyword id="KW-0106">Calcium</keyword>
<keyword id="KW-0130">Cell adhesion</keyword>
<keyword id="KW-1003">Cell membrane</keyword>
<keyword id="KW-0966">Cell projection</keyword>
<keyword id="KW-0903">Direct protein sequencing</keyword>
<keyword id="KW-0325">Glycoprotein</keyword>
<keyword id="KW-0357">Heparan sulfate</keyword>
<keyword id="KW-0472">Membrane</keyword>
<keyword id="KW-0479">Metal-binding</keyword>
<keyword id="KW-0654">Proteoglycan</keyword>
<keyword id="KW-1185">Reference proteome</keyword>
<keyword id="KW-0677">Repeat</keyword>
<keyword id="KW-0732">Signal</keyword>
<keyword id="KW-0770">Synapse</keyword>
<keyword id="KW-0812">Transmembrane</keyword>
<keyword id="KW-1133">Transmembrane helix</keyword>
<name>NRX2B_RAT</name>
<sequence length="662" mass="70547">MPPGGSGQGGCPRRPPALAGPLPPPPPPPPLPLLLGLLLLLGAAEGARVSSSLSTTHHVHHFHSKHGTVPIAINRMPFLTRSGHAGTTYIFGKGGALITYTWPPNDRPSTRMDRLAVGFSTHQRSAVLVRVDSASGLGDYLQLHIDQGTVGVIFNVGTDDITIDEPNAIVSDGKYHVVRFTRSGGNATLQVDSWPVNERYPAGNFDNERLAIARQRIPYRLGRVVDEWLLDKGRQLTIFNSQAAIKIGGRDQGRPFQGQVSGLYYNGLKVLALAAESDPNVRTEGHLRLVGEGPSVLLSAETTATTLLADMATTIMETTTTMATTTTRRGRSPTMRDSTTQNTDDLLVASAECPSDDEDLEECEPSTGGELILPIITEDSLDPPPVATRSPFVPPPPTFYPFLTGVGATQDTLPPPAARRPSSGGPCQAERDDSDCEEPVEASGFASGEVFDSSLPPTDDEDFYTTFPLVTDRTTLLSPRKPAPRPNLRTDGATGAPGVLLAPSAPAPNLPAGKMNHRDPLQPLLENPPLGPGVPTAFEPRRPPPLRPGVTSVPGFPRLPTANPTGPGERGPPGAVEVIRESSSTTGMVVGIVAAAALCILILLYAMYKYRNRDEGSYQVDQSRNYISNSAQSNGAVVKEKAPAAPKTPSKAKKNKDKEYYV</sequence>
<protein>
    <recommendedName>
        <fullName>Neurexin-2-beta</fullName>
    </recommendedName>
    <alternativeName>
        <fullName>Neurexin II-beta</fullName>
    </alternativeName>
</protein>
<evidence type="ECO:0000250" key="1">
    <source>
        <dbReference type="UniProtKB" id="E9PUN2"/>
    </source>
</evidence>
<evidence type="ECO:0000250" key="2">
    <source>
        <dbReference type="UniProtKB" id="E9Q7X7"/>
    </source>
</evidence>
<evidence type="ECO:0000250" key="3">
    <source>
        <dbReference type="UniProtKB" id="Q63373"/>
    </source>
</evidence>
<evidence type="ECO:0000255" key="4"/>
<evidence type="ECO:0000255" key="5">
    <source>
        <dbReference type="PROSITE-ProRule" id="PRU00122"/>
    </source>
</evidence>
<evidence type="ECO:0000256" key="6">
    <source>
        <dbReference type="SAM" id="MobiDB-lite"/>
    </source>
</evidence>
<evidence type="ECO:0000269" key="7">
    <source>
    </source>
</evidence>
<evidence type="ECO:0000269" key="8">
    <source>
    </source>
</evidence>
<evidence type="ECO:0000269" key="9">
    <source>
    </source>
</evidence>
<evidence type="ECO:0000305" key="10"/>
<evidence type="ECO:0007829" key="11">
    <source>
        <dbReference type="PDB" id="3MW3"/>
    </source>
</evidence>
<reference key="1">
    <citation type="journal article" date="1992" name="Science">
        <title>Neurexins: synaptic cell surface proteins related to the alpha-latrotoxin receptor and laminin.</title>
        <authorList>
            <person name="Ushkaryov Y.A."/>
            <person name="Petrenko A.G."/>
            <person name="Geppert M."/>
            <person name="Suedhof T.C."/>
        </authorList>
    </citation>
    <scope>NUCLEOTIDE SEQUENCE [MRNA]</scope>
    <scope>ALTERNATIVE SPLICING</scope>
    <source>
        <strain>Sprague-Dawley</strain>
        <tissue>Brain</tissue>
    </source>
</reference>
<reference key="2">
    <citation type="journal article" date="1994" name="J. Biol. Chem.">
        <title>Conserved domain structure of beta-neurexins. Unusual cleaved signal sequences in receptor-like neuronal cell-surface proteins.</title>
        <authorList>
            <person name="Ushkaryov Y.A."/>
            <person name="Hata Y."/>
            <person name="Ichtchenko K."/>
            <person name="Moomaw C."/>
            <person name="Afendis S."/>
            <person name="Slaughter C.A."/>
            <person name="Suedhof T.C."/>
        </authorList>
    </citation>
    <scope>PROTEIN SEQUENCE OF N-TERMINUS</scope>
    <source>
        <tissue>Brain</tissue>
    </source>
</reference>
<reference key="3">
    <citation type="journal article" date="1996" name="J. Neurosci.">
        <title>CASK: a novel dlg/PSD95 homolog with an N-terminal calmodulin-dependent protein kinase domain identified by interaction with neurexins.</title>
        <authorList>
            <person name="Hata Y."/>
            <person name="Butz S."/>
            <person name="Suedhof T.C."/>
        </authorList>
    </citation>
    <scope>INTERACTION WITH CASK</scope>
</reference>
<reference key="4">
    <citation type="journal article" date="1996" name="J. Biol. Chem.">
        <title>Structures, alternative splicing, and neurexin binding of multiple neuroligins.</title>
        <authorList>
            <person name="Ichtchenko K."/>
            <person name="Nguyen T."/>
            <person name="Suedhof T.C."/>
        </authorList>
    </citation>
    <scope>INTERACTION WITH NLGN1; NLGN2 AND NLGN3</scope>
</reference>
<organism>
    <name type="scientific">Rattus norvegicus</name>
    <name type="common">Rat</name>
    <dbReference type="NCBI Taxonomy" id="10116"/>
    <lineage>
        <taxon>Eukaryota</taxon>
        <taxon>Metazoa</taxon>
        <taxon>Chordata</taxon>
        <taxon>Craniata</taxon>
        <taxon>Vertebrata</taxon>
        <taxon>Euteleostomi</taxon>
        <taxon>Mammalia</taxon>
        <taxon>Eutheria</taxon>
        <taxon>Euarchontoglires</taxon>
        <taxon>Glires</taxon>
        <taxon>Rodentia</taxon>
        <taxon>Myomorpha</taxon>
        <taxon>Muroidea</taxon>
        <taxon>Muridae</taxon>
        <taxon>Murinae</taxon>
        <taxon>Rattus</taxon>
    </lineage>
</organism>